<reference key="1">
    <citation type="submission" date="2006-09" db="EMBL/GenBank/DDBJ databases">
        <title>NISC comparative sequencing initiative.</title>
        <authorList>
            <person name="Antonellis A."/>
            <person name="Ayele K."/>
            <person name="Benjamin B."/>
            <person name="Blakesley R.W."/>
            <person name="Boakye A."/>
            <person name="Bouffard G.G."/>
            <person name="Brinkley C."/>
            <person name="Brooks S."/>
            <person name="Chu G."/>
            <person name="Coleman H."/>
            <person name="Engle J."/>
            <person name="Gestole M."/>
            <person name="Greene A."/>
            <person name="Guan X."/>
            <person name="Gupta J."/>
            <person name="Haghighi P."/>
            <person name="Han J."/>
            <person name="Hansen N."/>
            <person name="Ho S.-L."/>
            <person name="Hu P."/>
            <person name="Hunter G."/>
            <person name="Hurle B."/>
            <person name="Idol J.R."/>
            <person name="Kwong P."/>
            <person name="Laric P."/>
            <person name="Larson S."/>
            <person name="Lee-Lin S.-Q."/>
            <person name="Legaspi R."/>
            <person name="Madden M."/>
            <person name="Maduro Q.L."/>
            <person name="Maduro V.B."/>
            <person name="Margulies E.H."/>
            <person name="Masiello C."/>
            <person name="Maskeri B."/>
            <person name="McDowell J."/>
            <person name="Mojidi H.A."/>
            <person name="Mullikin J.C."/>
            <person name="Oestreicher J.S."/>
            <person name="Park M."/>
            <person name="Portnoy M.E."/>
            <person name="Prasad A."/>
            <person name="Puri O."/>
            <person name="Reddix-Dugue N."/>
            <person name="Schandler K."/>
            <person name="Schueler M.G."/>
            <person name="Sison C."/>
            <person name="Stantripop S."/>
            <person name="Stephen E."/>
            <person name="Taye A."/>
            <person name="Thomas J.W."/>
            <person name="Thomas P.J."/>
            <person name="Tsipouri V."/>
            <person name="Ung L."/>
            <person name="Vogt J.L."/>
            <person name="Wetherby K.D."/>
            <person name="Young A."/>
            <person name="Green E.D."/>
        </authorList>
    </citation>
    <scope>NUCLEOTIDE SEQUENCE [LARGE SCALE GENOMIC DNA]</scope>
</reference>
<name>CFTR_ORNAN</name>
<comment type="function">
    <text evidence="1 2">Epithelial ion channel that plays an important role in the regulation of epithelial ion and water transport and fluid homeostasis. Mediates the transport of chloride ions across the cell membrane (By similarity). Possesses an intrinsic ATPase activity and utilizes ATP to gate its channel; the passive flow of anions through the channel is gated by cycles of ATP binding and hydrolysis by the ATP-binding domains (By similarity). The ion channel is also permeable to HCO(3)(-); selectivity depends on the extracellular chloride concentration. Exerts its function also by modulating the activity of other ion channels and transporters. Contributes to the regulation of the pH and the ion content of the epithelial fluid layer. Modulates the activity of the epithelial sodium channel (ENaC) complex, in part by regulating the cell surface expression of the ENaC complex. May regulate bicarbonate secretion and salvage in epithelial cells by regulating the transporter SLC4A7. Can inhibit the chloride channel activity of ANO1 (By similarity). Plays a role in the chloride and bicarbonate homeostasis during sperm epididymal maturation and capacitation (By similarity).</text>
</comment>
<comment type="catalytic activity">
    <reaction evidence="1">
        <text>ATP + H2O + closed Cl(-) channel = ADP + phosphate + open Cl(-) channel.</text>
        <dbReference type="EC" id="5.6.1.6"/>
    </reaction>
</comment>
<comment type="catalytic activity">
    <reaction evidence="1">
        <text>chloride(in) = chloride(out)</text>
        <dbReference type="Rhea" id="RHEA:29823"/>
        <dbReference type="ChEBI" id="CHEBI:17996"/>
    </reaction>
</comment>
<comment type="catalytic activity">
    <reaction evidence="1">
        <text>hydrogencarbonate(in) = hydrogencarbonate(out)</text>
        <dbReference type="Rhea" id="RHEA:28695"/>
        <dbReference type="ChEBI" id="CHEBI:17544"/>
    </reaction>
</comment>
<comment type="catalytic activity">
    <reaction evidence="1">
        <text>ATP + H2O = ADP + phosphate + H(+)</text>
        <dbReference type="Rhea" id="RHEA:13065"/>
        <dbReference type="ChEBI" id="CHEBI:15377"/>
        <dbReference type="ChEBI" id="CHEBI:15378"/>
        <dbReference type="ChEBI" id="CHEBI:30616"/>
        <dbReference type="ChEBI" id="CHEBI:43474"/>
        <dbReference type="ChEBI" id="CHEBI:456216"/>
    </reaction>
    <physiologicalReaction direction="left-to-right" evidence="1">
        <dbReference type="Rhea" id="RHEA:13066"/>
    </physiologicalReaction>
</comment>
<comment type="subunit">
    <text evidence="1 2 3">Monomer; does not require oligomerization for channel activity. May form oligomers in the membrane (By similarity). Interacts with SLC26A3, SLC26A6 and NHERF1 (By similarity). Interacts with SHANK2 (By similarity). Interacts with MYO6 (By similarity). Interacts (via C-terminus) with GOPC (via PDZ domain); this promotes CFTR internalization and thereby decreases channel activity. Interacts with SLC4A7 through NHERF1. Found in a complex with MYO5B and RAB11A. Interacts with ANO1. Interacts with SLC26A8 (By similarity). Interacts with AHCYL1; the interaction increases CFTR activity (By similarity). Interacts with CSE1L (By similarity). The core-glycosylated form interacts with GORASP2 (via PDZ GRASP-type 1 domain) in respone to ER stress (By similarity). Interacts with MARCHF2; the interaction leads to CFTR ubiqtuitination and degradation (By similarity). Interacts with ADGRG2 (By similarity).</text>
</comment>
<comment type="subcellular location">
    <subcellularLocation>
        <location evidence="2">Apical cell membrane</location>
        <topology evidence="1">Multi-pass membrane protein</topology>
    </subcellularLocation>
    <subcellularLocation>
        <location evidence="1">Early endosome membrane</location>
        <topology evidence="1">Multi-pass membrane protein</topology>
    </subcellularLocation>
    <subcellularLocation>
        <location evidence="2">Cell membrane</location>
        <topology evidence="1">Multi-pass membrane protein</topology>
    </subcellularLocation>
    <subcellularLocation>
        <location evidence="1">Recycling endosome membrane</location>
        <topology evidence="1">Multi-pass membrane protein</topology>
    </subcellularLocation>
    <subcellularLocation>
        <location evidence="1">Endoplasmic reticulum membrane</location>
        <topology evidence="1">Multi-pass membrane protein</topology>
    </subcellularLocation>
    <subcellularLocation>
        <location evidence="3">Nucleus</location>
    </subcellularLocation>
    <text evidence="1 3">The channel is internalized from the cell surface into an endosomal recycling compartment, from where it is recycled to the cell membrane. In the oviduct and bronchus, detected on the apical side of epithelial cells, but not associated with cilia. In Sertoli cells, a processed product is detected in the nucleus. ER stress induces GORASP2-mediated unconventional (ER/Golgi-independent) trafficking of core-glycosylated CFTR to cell membrane.</text>
</comment>
<comment type="domain">
    <text evidence="1 2">Binds and hydrolyzes ATP via the two cytoplasmic ABC transporter nucleotide-binding domains. The two ATP-binding domains interact with each other, forming a head-to-tail dimer. Normal ATPase activity requires interaction between the two domains. The first ABC transporter nucleotide-binding domain has no ATPase activity by itself.</text>
</comment>
<comment type="domain">
    <text evidence="1">The PDZ-binding motif mediates interactions with GOPC and with the SLC4A7, NHERF1/EBP50 complex.</text>
</comment>
<comment type="domain">
    <text evidence="1">The disordered R region mediates channel activation when it is phosphorylated, but not in the absence of phosphorylation.</text>
</comment>
<comment type="PTM">
    <text evidence="1">N-glycosylated.</text>
</comment>
<comment type="PTM">
    <text evidence="1">Phosphorylated; cAMP treatment promotes phosphorylation and activates the channel. Dephosphorylation decreases the ATPase activity (in vitro). Phosphorylation at PKA sites activates the channel. Phosphorylation at PKC sites enhances the response to phosphorylation by PKA. Phosphorylated by AMPK; this inhibits channel activity.</text>
</comment>
<comment type="PTM">
    <text evidence="1">Ubiquitinated, leading to its degradation in the lysosome. Deubiquitination by USP10 in early endosomes enhances its endocytic recycling to the cell membrane. Ubiquitinated by RNF185 during ER stress. Ubiquitinated by MARCHF2 (By similarity).</text>
</comment>
<comment type="similarity">
    <text evidence="8">Belongs to the ABC transporter superfamily. ABCC family. CFTR transporter (TC 3.A.1.202) subfamily.</text>
</comment>
<gene>
    <name evidence="1" type="primary">CFTR</name>
    <name type="synonym">ABCC7</name>
</gene>
<feature type="chain" id="PRO_0000260779" description="Cystic fibrosis transmembrane conductance regulator">
    <location>
        <begin position="1"/>
        <end position="1484"/>
    </location>
</feature>
<feature type="topological domain" description="Cytoplasmic" evidence="1">
    <location>
        <begin position="1"/>
        <end position="77"/>
    </location>
</feature>
<feature type="transmembrane region" description="Helical; Name=1" evidence="1">
    <location>
        <begin position="78"/>
        <end position="98"/>
    </location>
</feature>
<feature type="topological domain" description="Extracellular" evidence="1">
    <location>
        <begin position="99"/>
        <end position="122"/>
    </location>
</feature>
<feature type="transmembrane region" description="Helical; Name=2" evidence="1">
    <location>
        <begin position="123"/>
        <end position="146"/>
    </location>
</feature>
<feature type="topological domain" description="Cytoplasmic" evidence="1">
    <location>
        <begin position="147"/>
        <end position="195"/>
    </location>
</feature>
<feature type="transmembrane region" description="Helical; Name=3" evidence="1">
    <location>
        <begin position="196"/>
        <end position="216"/>
    </location>
</feature>
<feature type="topological domain" description="Extracellular" evidence="1">
    <location>
        <begin position="217"/>
        <end position="222"/>
    </location>
</feature>
<feature type="transmembrane region" description="Helical; Name=4" evidence="1">
    <location>
        <begin position="223"/>
        <end position="243"/>
    </location>
</feature>
<feature type="topological domain" description="Cytoplasmic" evidence="1">
    <location>
        <begin position="244"/>
        <end position="298"/>
    </location>
</feature>
<feature type="transmembrane region" description="Helical; Name=5" evidence="1">
    <location>
        <begin position="299"/>
        <end position="319"/>
    </location>
</feature>
<feature type="topological domain" description="Extracellular" evidence="1">
    <location>
        <begin position="320"/>
        <end position="339"/>
    </location>
</feature>
<feature type="transmembrane region" description="Helical; Name=6" evidence="1">
    <location>
        <begin position="340"/>
        <end position="358"/>
    </location>
</feature>
<feature type="topological domain" description="Cytoplasmic" evidence="1">
    <location>
        <begin position="359"/>
        <end position="859"/>
    </location>
</feature>
<feature type="transmembrane region" description="Helical; Name=7" evidence="1">
    <location>
        <begin position="860"/>
        <end position="880"/>
    </location>
</feature>
<feature type="topological domain" description="Extracellular" evidence="1">
    <location>
        <begin position="881"/>
        <end position="922"/>
    </location>
</feature>
<feature type="transmembrane region" description="Discontinuously helical; Name=8" evidence="1">
    <location>
        <begin position="923"/>
        <end position="943"/>
    </location>
</feature>
<feature type="topological domain" description="Cytoplasmic" evidence="1">
    <location>
        <begin position="944"/>
        <end position="994"/>
    </location>
</feature>
<feature type="transmembrane region" description="Helical; Name=9" evidence="1">
    <location>
        <begin position="995"/>
        <end position="1015"/>
    </location>
</feature>
<feature type="topological domain" description="Extracellular" evidence="1">
    <location>
        <begin position="1016"/>
        <end position="1017"/>
    </location>
</feature>
<feature type="transmembrane region" description="Helical; Name=10" evidence="1">
    <location>
        <begin position="1018"/>
        <end position="1038"/>
    </location>
</feature>
<feature type="topological domain" description="Cytoplasmic" evidence="1">
    <location>
        <begin position="1039"/>
        <end position="1099"/>
    </location>
</feature>
<feature type="transmembrane region" description="Helical; Name=11" evidence="1">
    <location>
        <begin position="1100"/>
        <end position="1120"/>
    </location>
</feature>
<feature type="topological domain" description="Extracellular" evidence="1">
    <location>
        <begin position="1121"/>
        <end position="1134"/>
    </location>
</feature>
<feature type="transmembrane region" description="Helical; Name=12" evidence="1">
    <location>
        <begin position="1135"/>
        <end position="1155"/>
    </location>
</feature>
<feature type="topological domain" description="Cytoplasmic" evidence="1">
    <location>
        <begin position="1156"/>
        <end position="1484"/>
    </location>
</feature>
<feature type="domain" description="ABC transmembrane type-1 1" evidence="6">
    <location>
        <begin position="81"/>
        <end position="365"/>
    </location>
</feature>
<feature type="domain" description="ABC transporter 1" evidence="5">
    <location>
        <begin position="423"/>
        <end position="646"/>
    </location>
</feature>
<feature type="domain" description="ABC transmembrane type-1 2" evidence="6">
    <location>
        <begin position="860"/>
        <end position="1159"/>
    </location>
</feature>
<feature type="domain" description="ABC transporter 2" evidence="5">
    <location>
        <begin position="1212"/>
        <end position="1445"/>
    </location>
</feature>
<feature type="region of interest" description="Disordered R region" evidence="1">
    <location>
        <begin position="654"/>
        <end position="832"/>
    </location>
</feature>
<feature type="region of interest" description="Interaction with GORASP2" evidence="1">
    <location>
        <begin position="1388"/>
        <end position="1484"/>
    </location>
</feature>
<feature type="region of interest" description="Disordered" evidence="7">
    <location>
        <begin position="1463"/>
        <end position="1484"/>
    </location>
</feature>
<feature type="short sequence motif" description="PDZ-binding" evidence="1">
    <location>
        <begin position="1482"/>
        <end position="1484"/>
    </location>
</feature>
<feature type="compositionally biased region" description="Acidic residues" evidence="7">
    <location>
        <begin position="1473"/>
        <end position="1484"/>
    </location>
</feature>
<feature type="binding site" evidence="1">
    <location>
        <position position="401"/>
    </location>
    <ligand>
        <name>ATP</name>
        <dbReference type="ChEBI" id="CHEBI:30616"/>
        <label>1</label>
    </ligand>
</feature>
<feature type="binding site" evidence="1">
    <location>
        <position position="434"/>
    </location>
    <ligand>
        <name>ATP</name>
        <dbReference type="ChEBI" id="CHEBI:30616"/>
        <label>1</label>
    </ligand>
</feature>
<feature type="binding site" evidence="5">
    <location>
        <begin position="458"/>
        <end position="465"/>
    </location>
    <ligand>
        <name>ATP</name>
        <dbReference type="ChEBI" id="CHEBI:30616"/>
        <label>1</label>
    </ligand>
</feature>
<feature type="binding site" evidence="2">
    <location>
        <position position="493"/>
    </location>
    <ligand>
        <name>ATP</name>
        <dbReference type="ChEBI" id="CHEBI:30616"/>
        <label>1</label>
    </ligand>
</feature>
<feature type="binding site" evidence="1">
    <location>
        <position position="1221"/>
    </location>
    <ligand>
        <name>ATP</name>
        <dbReference type="ChEBI" id="CHEBI:30616"/>
        <label>2</label>
    </ligand>
</feature>
<feature type="binding site" evidence="5">
    <location>
        <begin position="1246"/>
        <end position="1253"/>
    </location>
    <ligand>
        <name>ATP</name>
        <dbReference type="ChEBI" id="CHEBI:30616"/>
        <label>2</label>
    </ligand>
</feature>
<feature type="modified residue" description="Phosphoserine" evidence="1">
    <location>
        <position position="549"/>
    </location>
</feature>
<feature type="modified residue" description="Phosphoserine" evidence="1">
    <location>
        <position position="660"/>
    </location>
</feature>
<feature type="modified residue" description="Phosphoserine; by PKA" evidence="1">
    <location>
        <position position="670"/>
    </location>
</feature>
<feature type="modified residue" description="Phosphoserine" evidence="1">
    <location>
        <position position="686"/>
    </location>
</feature>
<feature type="modified residue" description="Phosphoserine" evidence="1">
    <location>
        <position position="700"/>
    </location>
</feature>
<feature type="modified residue" description="Phosphoserine" evidence="1">
    <location>
        <position position="712"/>
    </location>
</feature>
<feature type="modified residue" description="Phosphoserine" evidence="1">
    <location>
        <position position="737"/>
    </location>
</feature>
<feature type="modified residue" description="Phosphoserine" evidence="1">
    <location>
        <position position="768"/>
    </location>
</feature>
<feature type="modified residue" description="Phosphoserine" evidence="1">
    <location>
        <position position="791"/>
    </location>
</feature>
<feature type="modified residue" description="Phosphoserine" evidence="1">
    <location>
        <position position="796"/>
    </location>
</feature>
<feature type="modified residue" description="Phosphoserine" evidence="1">
    <location>
        <position position="814"/>
    </location>
</feature>
<feature type="modified residue" description="Phosphoserine" evidence="1">
    <location>
        <position position="1446"/>
    </location>
</feature>
<feature type="modified residue" description="Phosphoserine" evidence="1">
    <location>
        <position position="1460"/>
    </location>
</feature>
<feature type="lipid moiety-binding region" description="S-palmitoyl cysteine" evidence="1">
    <location>
        <position position="524"/>
    </location>
</feature>
<feature type="lipid moiety-binding region" description="S-palmitoyl cysteine" evidence="1">
    <location>
        <position position="1397"/>
    </location>
</feature>
<feature type="glycosylation site" description="N-linked (GlcNAc...) asparagine" evidence="4">
    <location>
        <position position="893"/>
    </location>
</feature>
<feature type="glycosylation site" description="N-linked (GlcNAc...) asparagine" evidence="4">
    <location>
        <position position="899"/>
    </location>
</feature>
<feature type="glycosylation site" description="N-linked (GlcNAc...) asparagine" evidence="4">
    <location>
        <position position="913"/>
    </location>
</feature>
<feature type="cross-link" description="Glycyl lysine isopeptide (Lys-Gly) (interchain with G-Cter in ubiquitin)" evidence="1">
    <location>
        <position position="688"/>
    </location>
</feature>
<evidence type="ECO:0000250" key="1">
    <source>
        <dbReference type="UniProtKB" id="P13569"/>
    </source>
</evidence>
<evidence type="ECO:0000250" key="2">
    <source>
        <dbReference type="UniProtKB" id="P26361"/>
    </source>
</evidence>
<evidence type="ECO:0000250" key="3">
    <source>
        <dbReference type="UniProtKB" id="P34158"/>
    </source>
</evidence>
<evidence type="ECO:0000255" key="4"/>
<evidence type="ECO:0000255" key="5">
    <source>
        <dbReference type="PROSITE-ProRule" id="PRU00434"/>
    </source>
</evidence>
<evidence type="ECO:0000255" key="6">
    <source>
        <dbReference type="PROSITE-ProRule" id="PRU00441"/>
    </source>
</evidence>
<evidence type="ECO:0000256" key="7">
    <source>
        <dbReference type="SAM" id="MobiDB-lite"/>
    </source>
</evidence>
<evidence type="ECO:0000305" key="8"/>
<accession>Q07DZ6</accession>
<keyword id="KW-0067">ATP-binding</keyword>
<keyword id="KW-1003">Cell membrane</keyword>
<keyword id="KW-0868">Chloride</keyword>
<keyword id="KW-0869">Chloride channel</keyword>
<keyword id="KW-0256">Endoplasmic reticulum</keyword>
<keyword id="KW-0967">Endosome</keyword>
<keyword id="KW-0325">Glycoprotein</keyword>
<keyword id="KW-0407">Ion channel</keyword>
<keyword id="KW-0406">Ion transport</keyword>
<keyword id="KW-0413">Isomerase</keyword>
<keyword id="KW-1017">Isopeptide bond</keyword>
<keyword id="KW-0449">Lipoprotein</keyword>
<keyword id="KW-0472">Membrane</keyword>
<keyword id="KW-0547">Nucleotide-binding</keyword>
<keyword id="KW-0539">Nucleus</keyword>
<keyword id="KW-0564">Palmitate</keyword>
<keyword id="KW-0597">Phosphoprotein</keyword>
<keyword id="KW-1185">Reference proteome</keyword>
<keyword id="KW-0677">Repeat</keyword>
<keyword id="KW-0812">Transmembrane</keyword>
<keyword id="KW-1133">Transmembrane helix</keyword>
<keyword id="KW-0813">Transport</keyword>
<keyword id="KW-0832">Ubl conjugation</keyword>
<sequence>MQRSPLERANLFSKLFFSWTKPILKKGYRQHLELSDIYQIPTADSADNLSEKLEREWDRELASKKNPKLINALRRCFFWRFMFYGLLLYLGEVTKAVQPLLLGRIIASYDPDNAHERSIAYYLGIGLCLLFIVRTLLLHPAVFGLHHIGMQMRIALFSLIYKKTLKLSSRVLDKISTGQLVSLLSNNLNKFDEGLALAHFVWIAPLQVMLLMGLLWDLLQASAFCGLAVLVVLVLFQAWLGHRMMKYRDRRAGKINERLVITAEIIENIQSVKAYCWEEAMENMIESLRETELKLTRKAAYMRYFNSSAFFFSGFFVVFLSVLPSMLTKGIVLRKIFTTISFCIVLRMAVTRQFPWAVQMWYDSIGAIYKIQDFLQKEEYKTLEYNLTTTDVVMENVTAFWDEGFGELLVKAKQNDSSRKVSSDDKNLIFSNISLLGPPVLKDISFKIEKGQLLAVAGSTGAGKTSLLMMIMGELEPLEGKIKHSGRISFSPQFSWIMPGTIKENIVFGVSFDEYRYRSVIKACQLEEEISKFAEKDNTVLGEGGITLSGGQRARISLARAVYKDADLYLLDSPFGYLDVLTEKEIFESCVCKLMANKTRILVTSKMEHLKKADKILILHEGSCYFYGAFSELQNLRPDFSSKLMGYDSFDQFSAERRNSILTETLRRFSLDGDAAGSWNETKKQSFKQTGEFGERRKNSILNPLNSIRKFSLVQKAPLQMNCIDETLDEPPERKLSLVPDSEPGEAILPRSNMLNPGPVLRARRRQSVLNLMTRPSIHQGSSLYKKGSASARKMSVAPQSNMSEMDIYSRRLSKDSGLEISEEINEEDLKECFIDDIESTTSVTTWNTYLRYMTIHKKLIFVLMMCLVIFLIEVAASLVGLCLFKDGASRMNSTSNLNHTSTLDWFAVIVTNTSTYYMFYIYVGVADTLLALGFLRGLPLVHSLISVSKILHQKMLHSVLQAPMSTFNTLKTGSILNRFSKDMAILDDLLPLTIFDFIQLLLIVIGAVTVVSALQPYIFLASVPVVIAFVLLRAYFLRTSQQLKQLESEARSPIFTHLITSLKGLWTLRAFGRQTYFEALFHKALNLHTANWFLYLSTLRWFQMRIEMVFVIFFILVTFISILTTGDGEGKVGIVLTLAMNIMGTLQWAVNASIDVDSLMRSVSRVFKFIDMPTEEHRPTHPAKNKDISGVLIIENQHVKREKNWPSGGQMTVQDLTAKYLDGGPAILDNISFSISSGQRVGLLGRTGSGKSTLLFAFLRLLNTEGDIRIDGISWDAVPVQQWRKAFGVIPQKVFIFSGSFRKNLDPYGQWTDQELWKVAEEVGLKSVIEQFPGQLDFVLIDGGYVLSHGHRQLMCLARSVLSKAKILLLDEPSAHLDPITYQVIRKTLKQAFTNCTVILSEHRIEAMLECQRFLVIEENKVRQYESIQKLLNEKSVFKQAISHSDKMKLFPIHRRNSSKRLSRPKITALQEETEEEVQDTRL</sequence>
<organism>
    <name type="scientific">Ornithorhynchus anatinus</name>
    <name type="common">Duckbill platypus</name>
    <dbReference type="NCBI Taxonomy" id="9258"/>
    <lineage>
        <taxon>Eukaryota</taxon>
        <taxon>Metazoa</taxon>
        <taxon>Chordata</taxon>
        <taxon>Craniata</taxon>
        <taxon>Vertebrata</taxon>
        <taxon>Euteleostomi</taxon>
        <taxon>Mammalia</taxon>
        <taxon>Monotremata</taxon>
        <taxon>Ornithorhynchidae</taxon>
        <taxon>Ornithorhynchus</taxon>
    </lineage>
</organism>
<protein>
    <recommendedName>
        <fullName evidence="1">Cystic fibrosis transmembrane conductance regulator</fullName>
        <shortName>CFTR</shortName>
    </recommendedName>
    <alternativeName>
        <fullName>ATP-binding cassette sub-family C member 7</fullName>
    </alternativeName>
    <alternativeName>
        <fullName>Channel conductance-controlling ATPase</fullName>
        <ecNumber evidence="1">5.6.1.6</ecNumber>
    </alternativeName>
    <alternativeName>
        <fullName>cAMP-dependent chloride channel</fullName>
    </alternativeName>
</protein>
<proteinExistence type="inferred from homology"/>
<dbReference type="EC" id="5.6.1.6" evidence="1"/>
<dbReference type="EMBL" id="DP000185">
    <property type="protein sequence ID" value="ABI93680.1"/>
    <property type="molecule type" value="Genomic_DNA"/>
</dbReference>
<dbReference type="RefSeq" id="NP_001229663.1">
    <property type="nucleotide sequence ID" value="NM_001242734.1"/>
</dbReference>
<dbReference type="SMR" id="Q07DZ6"/>
<dbReference type="FunCoup" id="Q07DZ6">
    <property type="interactions" value="468"/>
</dbReference>
<dbReference type="STRING" id="9258.ENSOANP00000013971"/>
<dbReference type="GlyCosmos" id="Q07DZ6">
    <property type="glycosylation" value="3 sites, No reported glycans"/>
</dbReference>
<dbReference type="Ensembl" id="ENSOANT00000013975.3">
    <property type="protein sequence ID" value="ENSOANP00000013972.2"/>
    <property type="gene ID" value="ENSOANG00000008767.4"/>
</dbReference>
<dbReference type="GeneID" id="100078764"/>
<dbReference type="KEGG" id="oaa:100078764"/>
<dbReference type="CTD" id="1080"/>
<dbReference type="eggNOG" id="KOG0054">
    <property type="taxonomic scope" value="Eukaryota"/>
</dbReference>
<dbReference type="GeneTree" id="ENSGT00940000158567"/>
<dbReference type="InParanoid" id="Q07DZ6"/>
<dbReference type="OMA" id="CQRYLVI"/>
<dbReference type="OrthoDB" id="6500128at2759"/>
<dbReference type="Proteomes" id="UP000002279">
    <property type="component" value="Chromosome 10"/>
</dbReference>
<dbReference type="Bgee" id="ENSOANG00000008767">
    <property type="expression patterns" value="Expressed in endometrium and 4 other cell types or tissues"/>
</dbReference>
<dbReference type="GO" id="GO:0016324">
    <property type="term" value="C:apical plasma membrane"/>
    <property type="evidence" value="ECO:0000250"/>
    <property type="project" value="UniProtKB"/>
</dbReference>
<dbReference type="GO" id="GO:0009986">
    <property type="term" value="C:cell surface"/>
    <property type="evidence" value="ECO:0007669"/>
    <property type="project" value="Ensembl"/>
</dbReference>
<dbReference type="GO" id="GO:0034707">
    <property type="term" value="C:chloride channel complex"/>
    <property type="evidence" value="ECO:0007669"/>
    <property type="project" value="UniProtKB-KW"/>
</dbReference>
<dbReference type="GO" id="GO:0005829">
    <property type="term" value="C:cytosol"/>
    <property type="evidence" value="ECO:0000318"/>
    <property type="project" value="GO_Central"/>
</dbReference>
<dbReference type="GO" id="GO:0005769">
    <property type="term" value="C:early endosome"/>
    <property type="evidence" value="ECO:0000250"/>
    <property type="project" value="UniProtKB"/>
</dbReference>
<dbReference type="GO" id="GO:0031901">
    <property type="term" value="C:early endosome membrane"/>
    <property type="evidence" value="ECO:0007669"/>
    <property type="project" value="UniProtKB-SubCell"/>
</dbReference>
<dbReference type="GO" id="GO:0005789">
    <property type="term" value="C:endoplasmic reticulum membrane"/>
    <property type="evidence" value="ECO:0000250"/>
    <property type="project" value="UniProtKB"/>
</dbReference>
<dbReference type="GO" id="GO:0016020">
    <property type="term" value="C:membrane"/>
    <property type="evidence" value="ECO:0000250"/>
    <property type="project" value="UniProtKB"/>
</dbReference>
<dbReference type="GO" id="GO:0005634">
    <property type="term" value="C:nucleus"/>
    <property type="evidence" value="ECO:0000250"/>
    <property type="project" value="UniProtKB"/>
</dbReference>
<dbReference type="GO" id="GO:0005886">
    <property type="term" value="C:plasma membrane"/>
    <property type="evidence" value="ECO:0000250"/>
    <property type="project" value="UniProtKB"/>
</dbReference>
<dbReference type="GO" id="GO:0055038">
    <property type="term" value="C:recycling endosome membrane"/>
    <property type="evidence" value="ECO:0007669"/>
    <property type="project" value="UniProtKB-SubCell"/>
</dbReference>
<dbReference type="GO" id="GO:0071889">
    <property type="term" value="F:14-3-3 protein binding"/>
    <property type="evidence" value="ECO:0007669"/>
    <property type="project" value="Ensembl"/>
</dbReference>
<dbReference type="GO" id="GO:0140359">
    <property type="term" value="F:ABC-type transporter activity"/>
    <property type="evidence" value="ECO:0007669"/>
    <property type="project" value="InterPro"/>
</dbReference>
<dbReference type="GO" id="GO:0005524">
    <property type="term" value="F:ATP binding"/>
    <property type="evidence" value="ECO:0007669"/>
    <property type="project" value="UniProtKB-KW"/>
</dbReference>
<dbReference type="GO" id="GO:0016887">
    <property type="term" value="F:ATP hydrolysis activity"/>
    <property type="evidence" value="ECO:0000250"/>
    <property type="project" value="UniProtKB"/>
</dbReference>
<dbReference type="GO" id="GO:0042626">
    <property type="term" value="F:ATPase-coupled transmembrane transporter activity"/>
    <property type="evidence" value="ECO:0000318"/>
    <property type="project" value="GO_Central"/>
</dbReference>
<dbReference type="GO" id="GO:0015106">
    <property type="term" value="F:bicarbonate transmembrane transporter activity"/>
    <property type="evidence" value="ECO:0000250"/>
    <property type="project" value="UniProtKB"/>
</dbReference>
<dbReference type="GO" id="GO:0005254">
    <property type="term" value="F:chloride channel activity"/>
    <property type="evidence" value="ECO:0000250"/>
    <property type="project" value="UniProtKB"/>
</dbReference>
<dbReference type="GO" id="GO:0019869">
    <property type="term" value="F:chloride channel inhibitor activity"/>
    <property type="evidence" value="ECO:0000250"/>
    <property type="project" value="UniProtKB"/>
</dbReference>
<dbReference type="GO" id="GO:0015108">
    <property type="term" value="F:chloride transmembrane transporter activity"/>
    <property type="evidence" value="ECO:0000250"/>
    <property type="project" value="UniProtKB"/>
</dbReference>
<dbReference type="GO" id="GO:0019899">
    <property type="term" value="F:enzyme binding"/>
    <property type="evidence" value="ECO:0007669"/>
    <property type="project" value="Ensembl"/>
</dbReference>
<dbReference type="GO" id="GO:0005260">
    <property type="term" value="F:intracellularly ATP-gated chloride channel activity"/>
    <property type="evidence" value="ECO:0000250"/>
    <property type="project" value="UniProtKB"/>
</dbReference>
<dbReference type="GO" id="GO:0030165">
    <property type="term" value="F:PDZ domain binding"/>
    <property type="evidence" value="ECO:0007669"/>
    <property type="project" value="Ensembl"/>
</dbReference>
<dbReference type="GO" id="GO:0051087">
    <property type="term" value="F:protein-folding chaperone binding"/>
    <property type="evidence" value="ECO:0007669"/>
    <property type="project" value="Ensembl"/>
</dbReference>
<dbReference type="GO" id="GO:0106138">
    <property type="term" value="F:Sec61 translocon complex binding"/>
    <property type="evidence" value="ECO:0007669"/>
    <property type="project" value="Ensembl"/>
</dbReference>
<dbReference type="GO" id="GO:0097186">
    <property type="term" value="P:amelogenesis"/>
    <property type="evidence" value="ECO:0007669"/>
    <property type="project" value="Ensembl"/>
</dbReference>
<dbReference type="GO" id="GO:0015701">
    <property type="term" value="P:bicarbonate transport"/>
    <property type="evidence" value="ECO:0000250"/>
    <property type="project" value="UniProtKB"/>
</dbReference>
<dbReference type="GO" id="GO:0071320">
    <property type="term" value="P:cellular response to cAMP"/>
    <property type="evidence" value="ECO:0000250"/>
    <property type="project" value="UniProtKB"/>
</dbReference>
<dbReference type="GO" id="GO:1904322">
    <property type="term" value="P:cellular response to forskolin"/>
    <property type="evidence" value="ECO:0000250"/>
    <property type="project" value="UniProtKB"/>
</dbReference>
<dbReference type="GO" id="GO:1902476">
    <property type="term" value="P:chloride transmembrane transport"/>
    <property type="evidence" value="ECO:0000250"/>
    <property type="project" value="UniProtKB"/>
</dbReference>
<dbReference type="GO" id="GO:0006695">
    <property type="term" value="P:cholesterol biosynthetic process"/>
    <property type="evidence" value="ECO:0007669"/>
    <property type="project" value="Ensembl"/>
</dbReference>
<dbReference type="GO" id="GO:0030301">
    <property type="term" value="P:cholesterol transport"/>
    <property type="evidence" value="ECO:0007669"/>
    <property type="project" value="Ensembl"/>
</dbReference>
<dbReference type="GO" id="GO:0051649">
    <property type="term" value="P:establishment of localization in cell"/>
    <property type="evidence" value="ECO:0007669"/>
    <property type="project" value="Ensembl"/>
</dbReference>
<dbReference type="GO" id="GO:0051454">
    <property type="term" value="P:intracellular pH elevation"/>
    <property type="evidence" value="ECO:0000250"/>
    <property type="project" value="UniProtKB"/>
</dbReference>
<dbReference type="GO" id="GO:0060081">
    <property type="term" value="P:membrane hyperpolarization"/>
    <property type="evidence" value="ECO:0000250"/>
    <property type="project" value="UniProtKB"/>
</dbReference>
<dbReference type="GO" id="GO:0050891">
    <property type="term" value="P:multicellular organismal-level water homeostasis"/>
    <property type="evidence" value="ECO:0000250"/>
    <property type="project" value="UniProtKB"/>
</dbReference>
<dbReference type="GO" id="GO:0070175">
    <property type="term" value="P:positive regulation of enamel mineralization"/>
    <property type="evidence" value="ECO:0007669"/>
    <property type="project" value="Ensembl"/>
</dbReference>
<dbReference type="GO" id="GO:0045921">
    <property type="term" value="P:positive regulation of exocytosis"/>
    <property type="evidence" value="ECO:0007669"/>
    <property type="project" value="Ensembl"/>
</dbReference>
<dbReference type="GO" id="GO:0035774">
    <property type="term" value="P:positive regulation of insulin secretion involved in cellular response to glucose stimulus"/>
    <property type="evidence" value="ECO:0007669"/>
    <property type="project" value="Ensembl"/>
</dbReference>
<dbReference type="GO" id="GO:0034976">
    <property type="term" value="P:response to endoplasmic reticulum stress"/>
    <property type="evidence" value="ECO:0000250"/>
    <property type="project" value="UniProtKB"/>
</dbReference>
<dbReference type="GO" id="GO:0048240">
    <property type="term" value="P:sperm capacitation"/>
    <property type="evidence" value="ECO:0000250"/>
    <property type="project" value="UniProtKB"/>
</dbReference>
<dbReference type="GO" id="GO:0035377">
    <property type="term" value="P:transepithelial water transport"/>
    <property type="evidence" value="ECO:0000250"/>
    <property type="project" value="UniProtKB"/>
</dbReference>
<dbReference type="GO" id="GO:0006904">
    <property type="term" value="P:vesicle docking involved in exocytosis"/>
    <property type="evidence" value="ECO:0007669"/>
    <property type="project" value="Ensembl"/>
</dbReference>
<dbReference type="CDD" id="cd18600">
    <property type="entry name" value="ABC_6TM_CFTR_D2"/>
    <property type="match status" value="1"/>
</dbReference>
<dbReference type="CDD" id="cd03291">
    <property type="entry name" value="ABCC_CFTR1"/>
    <property type="match status" value="1"/>
</dbReference>
<dbReference type="CDD" id="cd03289">
    <property type="entry name" value="ABCC_CFTR2"/>
    <property type="match status" value="1"/>
</dbReference>
<dbReference type="FunFam" id="1.20.1560.10:FF:000017">
    <property type="entry name" value="Cystic fibrosis transmembrane conductance regulator"/>
    <property type="match status" value="1"/>
</dbReference>
<dbReference type="FunFam" id="1.20.1560.10:FF:000019">
    <property type="entry name" value="Cystic fibrosis transmembrane conductance regulator"/>
    <property type="match status" value="1"/>
</dbReference>
<dbReference type="FunFam" id="3.40.50.300:FF:000581">
    <property type="entry name" value="Cystic fibrosis transmembrane conductance regulator"/>
    <property type="match status" value="1"/>
</dbReference>
<dbReference type="FunFam" id="3.40.50.300:FF:000591">
    <property type="entry name" value="Cystic fibrosis transmembrane conductance regulator"/>
    <property type="match status" value="1"/>
</dbReference>
<dbReference type="Gene3D" id="1.20.1560.10">
    <property type="entry name" value="ABC transporter type 1, transmembrane domain"/>
    <property type="match status" value="2"/>
</dbReference>
<dbReference type="Gene3D" id="3.40.50.300">
    <property type="entry name" value="P-loop containing nucleotide triphosphate hydrolases"/>
    <property type="match status" value="2"/>
</dbReference>
<dbReference type="InterPro" id="IPR003593">
    <property type="entry name" value="AAA+_ATPase"/>
</dbReference>
<dbReference type="InterPro" id="IPR011527">
    <property type="entry name" value="ABC1_TM_dom"/>
</dbReference>
<dbReference type="InterPro" id="IPR036640">
    <property type="entry name" value="ABC1_TM_sf"/>
</dbReference>
<dbReference type="InterPro" id="IPR003439">
    <property type="entry name" value="ABC_transporter-like_ATP-bd"/>
</dbReference>
<dbReference type="InterPro" id="IPR017871">
    <property type="entry name" value="ABC_transporter-like_CS"/>
</dbReference>
<dbReference type="InterPro" id="IPR050173">
    <property type="entry name" value="ABC_transporter_C-like"/>
</dbReference>
<dbReference type="InterPro" id="IPR009147">
    <property type="entry name" value="CFTR/ABCC7"/>
</dbReference>
<dbReference type="InterPro" id="IPR047082">
    <property type="entry name" value="CFTR1_ATP-bd_dom1"/>
</dbReference>
<dbReference type="InterPro" id="IPR025837">
    <property type="entry name" value="CFTR_reg_dom"/>
</dbReference>
<dbReference type="InterPro" id="IPR027417">
    <property type="entry name" value="P-loop_NTPase"/>
</dbReference>
<dbReference type="NCBIfam" id="TIGR01271">
    <property type="entry name" value="CFTR_protein"/>
    <property type="match status" value="1"/>
</dbReference>
<dbReference type="PANTHER" id="PTHR24223">
    <property type="entry name" value="ATP-BINDING CASSETTE SUB-FAMILY C"/>
    <property type="match status" value="1"/>
</dbReference>
<dbReference type="PANTHER" id="PTHR24223:SF19">
    <property type="entry name" value="CYSTIC FIBROSIS TRANSMEMBRANE CONDUCTANCE REGULATOR"/>
    <property type="match status" value="1"/>
</dbReference>
<dbReference type="Pfam" id="PF00664">
    <property type="entry name" value="ABC_membrane"/>
    <property type="match status" value="2"/>
</dbReference>
<dbReference type="Pfam" id="PF00005">
    <property type="entry name" value="ABC_tran"/>
    <property type="match status" value="2"/>
</dbReference>
<dbReference type="Pfam" id="PF14396">
    <property type="entry name" value="CFTR_R"/>
    <property type="match status" value="1"/>
</dbReference>
<dbReference type="PRINTS" id="PR01851">
    <property type="entry name" value="CYSFIBREGLTR"/>
</dbReference>
<dbReference type="SMART" id="SM00382">
    <property type="entry name" value="AAA"/>
    <property type="match status" value="2"/>
</dbReference>
<dbReference type="SUPFAM" id="SSF90123">
    <property type="entry name" value="ABC transporter transmembrane region"/>
    <property type="match status" value="2"/>
</dbReference>
<dbReference type="SUPFAM" id="SSF52540">
    <property type="entry name" value="P-loop containing nucleoside triphosphate hydrolases"/>
    <property type="match status" value="2"/>
</dbReference>
<dbReference type="PROSITE" id="PS50929">
    <property type="entry name" value="ABC_TM1F"/>
    <property type="match status" value="2"/>
</dbReference>
<dbReference type="PROSITE" id="PS00211">
    <property type="entry name" value="ABC_TRANSPORTER_1"/>
    <property type="match status" value="1"/>
</dbReference>
<dbReference type="PROSITE" id="PS50893">
    <property type="entry name" value="ABC_TRANSPORTER_2"/>
    <property type="match status" value="2"/>
</dbReference>